<evidence type="ECO:0000250" key="1">
    <source>
        <dbReference type="UniProtKB" id="P22307"/>
    </source>
</evidence>
<evidence type="ECO:0000255" key="2"/>
<evidence type="ECO:0000269" key="3">
    <source>
    </source>
</evidence>
<evidence type="ECO:0000269" key="4">
    <source>
    </source>
</evidence>
<evidence type="ECO:0000269" key="5">
    <source>
    </source>
</evidence>
<evidence type="ECO:0000269" key="6">
    <source>
    </source>
</evidence>
<evidence type="ECO:0000303" key="7">
    <source>
    </source>
</evidence>
<evidence type="ECO:0000305" key="8"/>
<evidence type="ECO:0000312" key="9">
    <source>
        <dbReference type="EMBL" id="BAA20377.1"/>
    </source>
</evidence>
<evidence type="ECO:0000312" key="10">
    <source>
        <dbReference type="Proteomes" id="UP000001940"/>
    </source>
</evidence>
<evidence type="ECO:0000312" key="11">
    <source>
        <dbReference type="WormBase" id="Y57A10C.6"/>
    </source>
</evidence>
<comment type="function">
    <text evidence="3 4 6">Catalyzes the thiolytic cleavage of 3-ketoacyl-CoA with 8-16 carbon residues in the acyl group using a ping-pong mechanism whereby binding to 3-ketooctanoyl-CoA results in the release of acetyl-CoA and the subsequent addition of CoA produces 3-ketohexanohyl-CoA (PubMed:9151950). Involved in the biosynthesis of the dauer pheromone by providing short chains of fatty acid that are attached to the ascarylose sugars of the pheromone (PubMed:19174521, PubMed:19496754).</text>
</comment>
<comment type="catalytic activity">
    <reaction evidence="6">
        <text>choloyl-CoA + propanoyl-CoA = 3alpha,7alpha,12alpha-trihydroxy-24-oxo-5beta-cholestan-26-oyl-CoA + CoA</text>
        <dbReference type="Rhea" id="RHEA:16865"/>
        <dbReference type="ChEBI" id="CHEBI:57287"/>
        <dbReference type="ChEBI" id="CHEBI:57373"/>
        <dbReference type="ChEBI" id="CHEBI:57392"/>
        <dbReference type="ChEBI" id="CHEBI:58507"/>
        <dbReference type="EC" id="2.3.1.176"/>
    </reaction>
</comment>
<comment type="activity regulation">
    <text evidence="6">Inhibited by acetyl-CoA.</text>
</comment>
<comment type="biophysicochemical properties">
    <kinetics>
        <KM evidence="6">80 uM for 3-ketooctanoyl-CoA (at 25 degrees Celsius)</KM>
        <KM evidence="6">0.7 uM for CoA (at 25 degrees Celsius)</KM>
        <Vmax evidence="6">0.1 mmol/min/mg enzyme</Vmax>
    </kinetics>
</comment>
<comment type="subcellular location">
    <subcellularLocation>
        <location evidence="3 4">Peroxisome</location>
    </subcellularLocation>
    <text evidence="3 4">Punctate localization in the cytoplasm.</text>
</comment>
<comment type="tissue specificity">
    <text evidence="3">Expressed in intestine, hypodermis and body-wall muscle.</text>
</comment>
<comment type="developmental stage">
    <text evidence="4">Expressed in all larval stages with levels peaking at the L3 larval stage and decreasing in the adult.</text>
</comment>
<comment type="disruption phenotype">
    <text evidence="3 4">In short-term culture, loss of the capacity to enter the dauer stage which is associated with a loss in the production of the dauer pheromone. In long-term culture, the capacity to induce the dauer stage is restored and is associated with the accumulation of long fatty acid chain ascarosides (PubMed:19174521). Intestinal expression of daf-22 restores the production of the pheromone (PubMed:19174521). Partial dauer phenotype in only half of mutants when the dauer pheromone is added exogenously (PubMed:19496754). In addition, mutants accumulate large fat granules in the intestine, have a decreased growth rate resulting in smaller adults and have a substantial reduction in brood size (PubMed:19496754).</text>
</comment>
<comment type="similarity">
    <text evidence="8">Belongs to the thiolase-like superfamily. Thiolase family.</text>
</comment>
<feature type="chain" id="PRO_0000431921" description="Non-specific lipid-transfer protein-like 2" evidence="8">
    <location>
        <begin position="1"/>
        <end position="412"/>
    </location>
</feature>
<feature type="short sequence motif" description="Microbody targeting signal" evidence="2">
    <location>
        <begin position="410"/>
        <end position="412"/>
    </location>
</feature>
<feature type="mutagenesis site" description="In m130; loss of dauer larvae formation and dauer pheromone production." evidence="3 5">
    <original>G</original>
    <variation>R</variation>
    <location>
        <position position="351"/>
    </location>
</feature>
<protein>
    <recommendedName>
        <fullName evidence="1">Non-specific lipid-transfer protein-like 2</fullName>
        <shortName evidence="1">NSL-TP2</shortName>
        <ecNumber evidence="6">2.3.1.176</ecNumber>
    </recommendedName>
    <alternativeName>
        <fullName evidence="7">3-keto-acyl-CoA thiolase</fullName>
    </alternativeName>
    <alternativeName>
        <fullName evidence="11">Abnormal dauer formation protein 22</fullName>
    </alternativeName>
    <alternativeName>
        <fullName evidence="8">Propanoyl-CoA C-acyltransferase</fullName>
    </alternativeName>
    <alternativeName>
        <fullName evidence="7">Protein P-44</fullName>
    </alternativeName>
</protein>
<organism evidence="10">
    <name type="scientific">Caenorhabditis elegans</name>
    <dbReference type="NCBI Taxonomy" id="6239"/>
    <lineage>
        <taxon>Eukaryota</taxon>
        <taxon>Metazoa</taxon>
        <taxon>Ecdysozoa</taxon>
        <taxon>Nematoda</taxon>
        <taxon>Chromadorea</taxon>
        <taxon>Rhabditida</taxon>
        <taxon>Rhabditina</taxon>
        <taxon>Rhabditomorpha</taxon>
        <taxon>Rhabditoidea</taxon>
        <taxon>Rhabditidae</taxon>
        <taxon>Peloderinae</taxon>
        <taxon>Caenorhabditis</taxon>
    </lineage>
</organism>
<proteinExistence type="evidence at protein level"/>
<reference evidence="9" key="1">
    <citation type="journal article" date="1997" name="Eur. J. Biochem.">
        <title>A second isoform of 3-ketoacyl-CoA thiolase found in Caenorhabditis elegans which is similar to sterol carrier protein x but lacks the sequence of sterol carrier protein 2.</title>
        <authorList>
            <person name="Bun-ya M."/>
            <person name="Maebuchi M."/>
            <person name="Hashimoto T."/>
            <person name="Yokota S."/>
            <person name="Kamiryo T."/>
        </authorList>
    </citation>
    <scope>NUCLEOTIDE SEQUENCE [MRNA]</scope>
    <scope>FUNCTION</scope>
    <scope>CATALYTIC ACTIVITY</scope>
    <scope>ACTIVITY REGULATION</scope>
    <scope>BIOPHYSICOCHEMICAL PROPERTIES</scope>
    <source>
        <strain evidence="9">Bristol N2</strain>
    </source>
</reference>
<reference evidence="10" key="2">
    <citation type="journal article" date="1998" name="Science">
        <title>Genome sequence of the nematode C. elegans: a platform for investigating biology.</title>
        <authorList>
            <consortium name="The C. elegans sequencing consortium"/>
        </authorList>
    </citation>
    <scope>NUCLEOTIDE SEQUENCE [LARGE SCALE GENOMIC DNA]</scope>
    <source>
        <strain evidence="10">Bristol N2</strain>
    </source>
</reference>
<reference evidence="8" key="3">
    <citation type="journal article" date="1985" name="Mol. Gen. Genet.">
        <title>A gene affecting production of the Caenorhabditis elegans dauer-inducing pheromone.</title>
        <authorList>
            <person name="Golden J.W."/>
            <person name="Riddle D.L."/>
        </authorList>
    </citation>
    <scope>CHARACTERIZATION OF M130 MUTANT</scope>
</reference>
<reference evidence="8" key="4">
    <citation type="journal article" date="2009" name="Biochem. J.">
        <title>Caenorhabditis elegans utilizes dauer pheromone biosynthesis to dispose of toxic peroxisomal fatty acids for cellular homoeostasis.</title>
        <authorList>
            <person name="Joo H.J."/>
            <person name="Yim Y.H."/>
            <person name="Jeong P.Y."/>
            <person name="Jin Y.X."/>
            <person name="Lee J.E."/>
            <person name="Kim H."/>
            <person name="Jeong S.K."/>
            <person name="Chitwood D.J."/>
            <person name="Paik Y.K."/>
        </authorList>
    </citation>
    <scope>FUNCTION</scope>
    <scope>SUBCELLULAR LOCATION</scope>
    <scope>DEVELOPMENTAL STAGE</scope>
    <scope>DISRUPTION PHENOTYPE</scope>
</reference>
<reference evidence="8" key="5">
    <citation type="journal article" date="2009" name="Proc. Natl. Acad. Sci. U.S.A.">
        <title>Biosynthesis of the Caenorhabditis elegans dauer pheromone.</title>
        <authorList>
            <person name="Butcher R.A."/>
            <person name="Ragains J.R."/>
            <person name="Li W."/>
            <person name="Ruvkun G."/>
            <person name="Clardy J."/>
            <person name="Mak H.Y."/>
        </authorList>
    </citation>
    <scope>FUNCTION</scope>
    <scope>SUBCELLULAR LOCATION</scope>
    <scope>TISSUE SPECIFICITY</scope>
    <scope>DISRUPTION PHENOTYPE</scope>
    <scope>MUTAGENESIS OF GLY-351</scope>
</reference>
<keyword id="KW-0445">Lipid transport</keyword>
<keyword id="KW-0446">Lipid-binding</keyword>
<keyword id="KW-0576">Peroxisome</keyword>
<keyword id="KW-1185">Reference proteome</keyword>
<keyword id="KW-0808">Transferase</keyword>
<keyword id="KW-0813">Transport</keyword>
<sequence length="412" mass="44386">MTPTKPKVYIVGVGMTKFCKPGSVPGWDYPDMVKEAVTTALDDCKMKYSDIQQATVGYLFGGTCCGQRALYEVGLTGIPIFNVNNACASGSSGLFLGKQIIESGNSDVVLCAGFERMAPGSLENLAAPIDDRALSVDKHISVMSETYGLEPAPMTAQMFGNAAKEHMEKYGSKREHYAKIAYKNHLHSVHNPKSQFTKEFSLDQVINARKIYDFMGLLECSPTSDGAAAAVLVSEKFLEKNPRLKAQAVEIVGLKLGTDEPSVFAENSNIKMIGFDMIQKLAKQLWAETKLTPNDVQVIELHDCFAPNELITYEAIGLCPVGQGHHIVDRNDNTYGGKWVINPSGGLISKGHPIGATGVAQAVELSNQLRGKCGKRQVPNCKVAMQHNIGIGGAGVVGLYRLGFPGAAQSKI</sequence>
<dbReference type="EC" id="2.3.1.176" evidence="6"/>
<dbReference type="EMBL" id="D86473">
    <property type="protein sequence ID" value="BAA20377.1"/>
    <property type="molecule type" value="mRNA"/>
</dbReference>
<dbReference type="EMBL" id="AL023847">
    <property type="protein sequence ID" value="CAA19548.1"/>
    <property type="molecule type" value="Genomic_DNA"/>
</dbReference>
<dbReference type="PIR" id="T27202">
    <property type="entry name" value="T27202"/>
</dbReference>
<dbReference type="RefSeq" id="NP_496639.1">
    <property type="nucleotide sequence ID" value="NM_064238.7"/>
</dbReference>
<dbReference type="SMR" id="G5EDP2"/>
<dbReference type="FunCoup" id="G5EDP2">
    <property type="interactions" value="1833"/>
</dbReference>
<dbReference type="IntAct" id="G5EDP2">
    <property type="interactions" value="1"/>
</dbReference>
<dbReference type="STRING" id="6239.Y57A10C.6.1"/>
<dbReference type="PaxDb" id="6239-Y57A10C.6"/>
<dbReference type="PeptideAtlas" id="G5EDP2"/>
<dbReference type="EnsemblMetazoa" id="Y57A10C.6.1">
    <property type="protein sequence ID" value="Y57A10C.6.1"/>
    <property type="gene ID" value="WBGene00013284"/>
</dbReference>
<dbReference type="GeneID" id="174881"/>
<dbReference type="KEGG" id="cel:CELE_Y57A10C.6"/>
<dbReference type="AGR" id="WB:WBGene00013284"/>
<dbReference type="CTD" id="174881"/>
<dbReference type="WormBase" id="Y57A10C.6">
    <property type="protein sequence ID" value="CE18418"/>
    <property type="gene ID" value="WBGene00013284"/>
    <property type="gene designation" value="daf-22"/>
</dbReference>
<dbReference type="eggNOG" id="KOG1406">
    <property type="taxonomic scope" value="Eukaryota"/>
</dbReference>
<dbReference type="GeneTree" id="ENSGT01030000234626"/>
<dbReference type="HOGENOM" id="CLU_035425_0_0_1"/>
<dbReference type="InParanoid" id="G5EDP2"/>
<dbReference type="OMA" id="PSLYAMM"/>
<dbReference type="OrthoDB" id="542135at2759"/>
<dbReference type="PhylomeDB" id="G5EDP2"/>
<dbReference type="SABIO-RK" id="G5EDP2"/>
<dbReference type="PRO" id="PR:G5EDP2"/>
<dbReference type="Proteomes" id="UP000001940">
    <property type="component" value="Chromosome II"/>
</dbReference>
<dbReference type="Bgee" id="WBGene00013284">
    <property type="expression patterns" value="Expressed in larva and 3 other cell types or tissues"/>
</dbReference>
<dbReference type="GO" id="GO:0005777">
    <property type="term" value="C:peroxisome"/>
    <property type="evidence" value="ECO:0000314"/>
    <property type="project" value="WormBase"/>
</dbReference>
<dbReference type="GO" id="GO:0016746">
    <property type="term" value="F:acyltransferase activity"/>
    <property type="evidence" value="ECO:0000318"/>
    <property type="project" value="GO_Central"/>
</dbReference>
<dbReference type="GO" id="GO:0008289">
    <property type="term" value="F:lipid binding"/>
    <property type="evidence" value="ECO:0007669"/>
    <property type="project" value="UniProtKB-KW"/>
</dbReference>
<dbReference type="GO" id="GO:0033814">
    <property type="term" value="F:propanoyl-CoA C-acyltransferase activity"/>
    <property type="evidence" value="ECO:0000314"/>
    <property type="project" value="UniProtKB"/>
</dbReference>
<dbReference type="GO" id="GO:0006637">
    <property type="term" value="P:acyl-CoA metabolic process"/>
    <property type="evidence" value="ECO:0000315"/>
    <property type="project" value="UniProtKB"/>
</dbReference>
<dbReference type="GO" id="GO:1904070">
    <property type="term" value="P:ascaroside biosynthetic process"/>
    <property type="evidence" value="ECO:0000315"/>
    <property type="project" value="UniProtKB"/>
</dbReference>
<dbReference type="GO" id="GO:0043053">
    <property type="term" value="P:dauer entry"/>
    <property type="evidence" value="ECO:0000315"/>
    <property type="project" value="UniProtKB"/>
</dbReference>
<dbReference type="GO" id="GO:0043054">
    <property type="term" value="P:dauer exit"/>
    <property type="evidence" value="ECO:0000315"/>
    <property type="project" value="UniProtKB"/>
</dbReference>
<dbReference type="GO" id="GO:0006869">
    <property type="term" value="P:lipid transport"/>
    <property type="evidence" value="ECO:0007669"/>
    <property type="project" value="UniProtKB-KW"/>
</dbReference>
<dbReference type="GO" id="GO:0010888">
    <property type="term" value="P:negative regulation of lipid storage"/>
    <property type="evidence" value="ECO:0000315"/>
    <property type="project" value="UniProtKB"/>
</dbReference>
<dbReference type="GO" id="GO:0008355">
    <property type="term" value="P:olfactory learning"/>
    <property type="evidence" value="ECO:0000315"/>
    <property type="project" value="UniProtKB"/>
</dbReference>
<dbReference type="GO" id="GO:0042811">
    <property type="term" value="P:pheromone biosynthetic process"/>
    <property type="evidence" value="ECO:0000315"/>
    <property type="project" value="UniProtKB"/>
</dbReference>
<dbReference type="GO" id="GO:0048639">
    <property type="term" value="P:positive regulation of developmental growth"/>
    <property type="evidence" value="ECO:0000315"/>
    <property type="project" value="UniProtKB"/>
</dbReference>
<dbReference type="GO" id="GO:0061063">
    <property type="term" value="P:positive regulation of nematode larval development"/>
    <property type="evidence" value="ECO:0000315"/>
    <property type="project" value="UniProtKB"/>
</dbReference>
<dbReference type="GO" id="GO:0050920">
    <property type="term" value="P:regulation of chemotaxis"/>
    <property type="evidence" value="ECO:0000315"/>
    <property type="project" value="UniProtKB"/>
</dbReference>
<dbReference type="GO" id="GO:0019236">
    <property type="term" value="P:response to pheromone"/>
    <property type="evidence" value="ECO:0000315"/>
    <property type="project" value="UniProtKB"/>
</dbReference>
<dbReference type="GO" id="GO:0000038">
    <property type="term" value="P:very long-chain fatty acid metabolic process"/>
    <property type="evidence" value="ECO:0000315"/>
    <property type="project" value="UniProtKB"/>
</dbReference>
<dbReference type="CDD" id="cd00829">
    <property type="entry name" value="SCP-x_thiolase"/>
    <property type="match status" value="1"/>
</dbReference>
<dbReference type="FunFam" id="3.40.47.10:FF:000016">
    <property type="entry name" value="Non-specific lipid-transfer protein"/>
    <property type="match status" value="1"/>
</dbReference>
<dbReference type="Gene3D" id="3.40.47.10">
    <property type="match status" value="1"/>
</dbReference>
<dbReference type="InterPro" id="IPR002155">
    <property type="entry name" value="Thiolase"/>
</dbReference>
<dbReference type="InterPro" id="IPR016039">
    <property type="entry name" value="Thiolase-like"/>
</dbReference>
<dbReference type="InterPro" id="IPR020615">
    <property type="entry name" value="Thiolase_acyl_enz_int_AS"/>
</dbReference>
<dbReference type="InterPro" id="IPR055140">
    <property type="entry name" value="Thiolase_C_2"/>
</dbReference>
<dbReference type="InterPro" id="IPR020613">
    <property type="entry name" value="Thiolase_CS"/>
</dbReference>
<dbReference type="InterPro" id="IPR020616">
    <property type="entry name" value="Thiolase_N"/>
</dbReference>
<dbReference type="NCBIfam" id="NF006102">
    <property type="entry name" value="PRK08256.1"/>
    <property type="match status" value="1"/>
</dbReference>
<dbReference type="PANTHER" id="PTHR42870">
    <property type="entry name" value="ACETYL-COA C-ACETYLTRANSFERASE"/>
    <property type="match status" value="1"/>
</dbReference>
<dbReference type="PANTHER" id="PTHR42870:SF1">
    <property type="entry name" value="NON-SPECIFIC LIPID-TRANSFER PROTEIN-LIKE 2"/>
    <property type="match status" value="1"/>
</dbReference>
<dbReference type="Pfam" id="PF22691">
    <property type="entry name" value="Thiolase_C_1"/>
    <property type="match status" value="1"/>
</dbReference>
<dbReference type="Pfam" id="PF00108">
    <property type="entry name" value="Thiolase_N"/>
    <property type="match status" value="1"/>
</dbReference>
<dbReference type="PIRSF" id="PIRSF000429">
    <property type="entry name" value="Ac-CoA_Ac_transf"/>
    <property type="match status" value="1"/>
</dbReference>
<dbReference type="SUPFAM" id="SSF53901">
    <property type="entry name" value="Thiolase-like"/>
    <property type="match status" value="2"/>
</dbReference>
<dbReference type="PROSITE" id="PS00098">
    <property type="entry name" value="THIOLASE_1"/>
    <property type="match status" value="1"/>
</dbReference>
<dbReference type="PROSITE" id="PS00737">
    <property type="entry name" value="THIOLASE_2"/>
    <property type="match status" value="1"/>
</dbReference>
<gene>
    <name evidence="11" type="primary">daf-22</name>
    <name evidence="11" type="ORF">Y57A10C.6</name>
</gene>
<accession>G5EDP2</accession>
<name>NLTP2_CAEEL</name>